<proteinExistence type="inferred from homology"/>
<evidence type="ECO:0000255" key="1">
    <source>
        <dbReference type="HAMAP-Rule" id="MF_00270"/>
    </source>
</evidence>
<evidence type="ECO:0000305" key="2"/>
<sequence length="75" mass="8986">MARYFRRRKFCRFTAEGVQEIDYKDIATLKNYITESGKIVPSRITGTRAKYQRQLARAIKRARYLSLLPYTDRHQ</sequence>
<dbReference type="EMBL" id="CP000880">
    <property type="protein sequence ID" value="ABX23075.1"/>
    <property type="molecule type" value="Genomic_DNA"/>
</dbReference>
<dbReference type="SMR" id="A9MFK9"/>
<dbReference type="STRING" id="41514.SARI_03239"/>
<dbReference type="KEGG" id="ses:SARI_03239"/>
<dbReference type="HOGENOM" id="CLU_148710_2_3_6"/>
<dbReference type="Proteomes" id="UP000002084">
    <property type="component" value="Chromosome"/>
</dbReference>
<dbReference type="GO" id="GO:0022627">
    <property type="term" value="C:cytosolic small ribosomal subunit"/>
    <property type="evidence" value="ECO:0007669"/>
    <property type="project" value="TreeGrafter"/>
</dbReference>
<dbReference type="GO" id="GO:0070181">
    <property type="term" value="F:small ribosomal subunit rRNA binding"/>
    <property type="evidence" value="ECO:0007669"/>
    <property type="project" value="TreeGrafter"/>
</dbReference>
<dbReference type="GO" id="GO:0003735">
    <property type="term" value="F:structural constituent of ribosome"/>
    <property type="evidence" value="ECO:0007669"/>
    <property type="project" value="InterPro"/>
</dbReference>
<dbReference type="GO" id="GO:0006412">
    <property type="term" value="P:translation"/>
    <property type="evidence" value="ECO:0007669"/>
    <property type="project" value="UniProtKB-UniRule"/>
</dbReference>
<dbReference type="FunFam" id="4.10.640.10:FF:000001">
    <property type="entry name" value="30S ribosomal protein S18"/>
    <property type="match status" value="1"/>
</dbReference>
<dbReference type="Gene3D" id="4.10.640.10">
    <property type="entry name" value="Ribosomal protein S18"/>
    <property type="match status" value="1"/>
</dbReference>
<dbReference type="HAMAP" id="MF_00270">
    <property type="entry name" value="Ribosomal_bS18"/>
    <property type="match status" value="1"/>
</dbReference>
<dbReference type="InterPro" id="IPR001648">
    <property type="entry name" value="Ribosomal_bS18"/>
</dbReference>
<dbReference type="InterPro" id="IPR018275">
    <property type="entry name" value="Ribosomal_bS18_CS"/>
</dbReference>
<dbReference type="InterPro" id="IPR036870">
    <property type="entry name" value="Ribosomal_bS18_sf"/>
</dbReference>
<dbReference type="NCBIfam" id="TIGR00165">
    <property type="entry name" value="S18"/>
    <property type="match status" value="1"/>
</dbReference>
<dbReference type="PANTHER" id="PTHR13479">
    <property type="entry name" value="30S RIBOSOMAL PROTEIN S18"/>
    <property type="match status" value="1"/>
</dbReference>
<dbReference type="PANTHER" id="PTHR13479:SF40">
    <property type="entry name" value="SMALL RIBOSOMAL SUBUNIT PROTEIN BS18M"/>
    <property type="match status" value="1"/>
</dbReference>
<dbReference type="Pfam" id="PF01084">
    <property type="entry name" value="Ribosomal_S18"/>
    <property type="match status" value="1"/>
</dbReference>
<dbReference type="PRINTS" id="PR00974">
    <property type="entry name" value="RIBOSOMALS18"/>
</dbReference>
<dbReference type="SUPFAM" id="SSF46911">
    <property type="entry name" value="Ribosomal protein S18"/>
    <property type="match status" value="1"/>
</dbReference>
<dbReference type="PROSITE" id="PS00057">
    <property type="entry name" value="RIBOSOMAL_S18"/>
    <property type="match status" value="1"/>
</dbReference>
<name>RS18_SALAR</name>
<feature type="chain" id="PRO_1000078710" description="Small ribosomal subunit protein bS18">
    <location>
        <begin position="1"/>
        <end position="75"/>
    </location>
</feature>
<keyword id="KW-1185">Reference proteome</keyword>
<keyword id="KW-0687">Ribonucleoprotein</keyword>
<keyword id="KW-0689">Ribosomal protein</keyword>
<keyword id="KW-0694">RNA-binding</keyword>
<keyword id="KW-0699">rRNA-binding</keyword>
<protein>
    <recommendedName>
        <fullName evidence="1">Small ribosomal subunit protein bS18</fullName>
    </recommendedName>
    <alternativeName>
        <fullName evidence="2">30S ribosomal protein S18</fullName>
    </alternativeName>
</protein>
<accession>A9MFK9</accession>
<reference key="1">
    <citation type="submission" date="2007-11" db="EMBL/GenBank/DDBJ databases">
        <authorList>
            <consortium name="The Salmonella enterica serovar Arizonae Genome Sequencing Project"/>
            <person name="McClelland M."/>
            <person name="Sanderson E.K."/>
            <person name="Porwollik S."/>
            <person name="Spieth J."/>
            <person name="Clifton W.S."/>
            <person name="Fulton R."/>
            <person name="Chunyan W."/>
            <person name="Wollam A."/>
            <person name="Shah N."/>
            <person name="Pepin K."/>
            <person name="Bhonagiri V."/>
            <person name="Nash W."/>
            <person name="Johnson M."/>
            <person name="Thiruvilangam P."/>
            <person name="Wilson R."/>
        </authorList>
    </citation>
    <scope>NUCLEOTIDE SEQUENCE [LARGE SCALE GENOMIC DNA]</scope>
    <source>
        <strain>ATCC BAA-731 / CDC346-86 / RSK2980</strain>
    </source>
</reference>
<gene>
    <name evidence="1" type="primary">rpsR</name>
    <name type="ordered locus">SARI_03239</name>
</gene>
<comment type="function">
    <text evidence="1">Binds as a heterodimer with protein bS6 to the central domain of the 16S rRNA, where it helps stabilize the platform of the 30S subunit.</text>
</comment>
<comment type="subunit">
    <text evidence="1">Part of the 30S ribosomal subunit. Forms a tight heterodimer with protein bS6.</text>
</comment>
<comment type="similarity">
    <text evidence="1">Belongs to the bacterial ribosomal protein bS18 family.</text>
</comment>
<organism>
    <name type="scientific">Salmonella arizonae (strain ATCC BAA-731 / CDC346-86 / RSK2980)</name>
    <dbReference type="NCBI Taxonomy" id="41514"/>
    <lineage>
        <taxon>Bacteria</taxon>
        <taxon>Pseudomonadati</taxon>
        <taxon>Pseudomonadota</taxon>
        <taxon>Gammaproteobacteria</taxon>
        <taxon>Enterobacterales</taxon>
        <taxon>Enterobacteriaceae</taxon>
        <taxon>Salmonella</taxon>
    </lineage>
</organism>